<keyword id="KW-1003">Cell membrane</keyword>
<keyword id="KW-0204">Cytolysis</keyword>
<keyword id="KW-0472">Membrane</keyword>
<keyword id="KW-0812">Transmembrane</keyword>
<keyword id="KW-1133">Transmembrane helix</keyword>
<proteinExistence type="inferred from homology"/>
<dbReference type="EMBL" id="BX571857">
    <property type="protein sequence ID" value="CAG42009.1"/>
    <property type="molecule type" value="Genomic_DNA"/>
</dbReference>
<dbReference type="RefSeq" id="WP_001793213.1">
    <property type="nucleotide sequence ID" value="NC_002953.3"/>
</dbReference>
<dbReference type="KEGG" id="sas:SAS0239"/>
<dbReference type="HOGENOM" id="CLU_113736_0_1_9"/>
<dbReference type="GO" id="GO:0005886">
    <property type="term" value="C:plasma membrane"/>
    <property type="evidence" value="ECO:0007669"/>
    <property type="project" value="UniProtKB-SubCell"/>
</dbReference>
<dbReference type="GO" id="GO:0019835">
    <property type="term" value="P:cytolysis"/>
    <property type="evidence" value="ECO:0007669"/>
    <property type="project" value="UniProtKB-UniRule"/>
</dbReference>
<dbReference type="GO" id="GO:0031640">
    <property type="term" value="P:killing of cells of another organism"/>
    <property type="evidence" value="ECO:0007669"/>
    <property type="project" value="UniProtKB-KW"/>
</dbReference>
<dbReference type="GO" id="GO:0012501">
    <property type="term" value="P:programmed cell death"/>
    <property type="evidence" value="ECO:0007669"/>
    <property type="project" value="UniProtKB-UniRule"/>
</dbReference>
<dbReference type="HAMAP" id="MF_01141">
    <property type="entry name" value="LrgA"/>
    <property type="match status" value="1"/>
</dbReference>
<dbReference type="InterPro" id="IPR023736">
    <property type="entry name" value="Antiholin-like_LrgA"/>
</dbReference>
<dbReference type="InterPro" id="IPR005538">
    <property type="entry name" value="LrgA/CidA"/>
</dbReference>
<dbReference type="NCBIfam" id="NF003155">
    <property type="entry name" value="PRK04125.1"/>
    <property type="match status" value="1"/>
</dbReference>
<dbReference type="PANTHER" id="PTHR33931:SF4">
    <property type="entry name" value="ANTIHOLIN-LIKE PROTEIN LRGA"/>
    <property type="match status" value="1"/>
</dbReference>
<dbReference type="PANTHER" id="PTHR33931">
    <property type="entry name" value="HOLIN-LIKE PROTEIN CIDA-RELATED"/>
    <property type="match status" value="1"/>
</dbReference>
<dbReference type="Pfam" id="PF03788">
    <property type="entry name" value="LrgA"/>
    <property type="match status" value="1"/>
</dbReference>
<accession>Q6GCL0</accession>
<organism>
    <name type="scientific">Staphylococcus aureus (strain MSSA476)</name>
    <dbReference type="NCBI Taxonomy" id="282459"/>
    <lineage>
        <taxon>Bacteria</taxon>
        <taxon>Bacillati</taxon>
        <taxon>Bacillota</taxon>
        <taxon>Bacilli</taxon>
        <taxon>Bacillales</taxon>
        <taxon>Staphylococcaceae</taxon>
        <taxon>Staphylococcus</taxon>
    </lineage>
</organism>
<comment type="function">
    <text evidence="1">Inhibits the expression or activity of extracellular murein hydrolases by interacting, possibly with LrgB, with the holin-like proteins CidA and/or CidB. The LrgAB and CidAB proteins may affect the proton motive force of the membrane. May be involved in programmed cell death (PCD), possibly triggering PCD in response to antibiotics and environmental stresses.</text>
</comment>
<comment type="subcellular location">
    <subcellularLocation>
        <location evidence="1">Cell membrane</location>
        <topology evidence="1">Multi-pass membrane protein</topology>
    </subcellularLocation>
</comment>
<comment type="similarity">
    <text evidence="1">Belongs to the CidA/LrgA family. LrgA subfamily.</text>
</comment>
<gene>
    <name evidence="1" type="primary">lrgA</name>
    <name type="ordered locus">SAS0239</name>
</gene>
<sequence>MVVKQQKDASKPAHFFHQVIVIALVLFVSKIIESFMPIPMPGSVIGLVLLFVLLCTGAVKLGEVEKVGTTLTNNIGLLFVPAGISVVNSLGVISQAPFLIIGLIIVSTILLLICTGYVTQIIMKVTSRSKGDKVTKKIKIEEAQAHD</sequence>
<feature type="chain" id="PRO_0000213194" description="Antiholin-like protein LrgA">
    <location>
        <begin position="1"/>
        <end position="147"/>
    </location>
</feature>
<feature type="transmembrane region" description="Helical" evidence="1">
    <location>
        <begin position="12"/>
        <end position="32"/>
    </location>
</feature>
<feature type="transmembrane region" description="Helical" evidence="1">
    <location>
        <begin position="35"/>
        <end position="55"/>
    </location>
</feature>
<feature type="transmembrane region" description="Helical" evidence="1">
    <location>
        <begin position="74"/>
        <end position="94"/>
    </location>
</feature>
<feature type="transmembrane region" description="Helical" evidence="1">
    <location>
        <begin position="98"/>
        <end position="118"/>
    </location>
</feature>
<evidence type="ECO:0000255" key="1">
    <source>
        <dbReference type="HAMAP-Rule" id="MF_01141"/>
    </source>
</evidence>
<reference key="1">
    <citation type="journal article" date="2004" name="Proc. Natl. Acad. Sci. U.S.A.">
        <title>Complete genomes of two clinical Staphylococcus aureus strains: evidence for the rapid evolution of virulence and drug resistance.</title>
        <authorList>
            <person name="Holden M.T.G."/>
            <person name="Feil E.J."/>
            <person name="Lindsay J.A."/>
            <person name="Peacock S.J."/>
            <person name="Day N.P.J."/>
            <person name="Enright M.C."/>
            <person name="Foster T.J."/>
            <person name="Moore C.E."/>
            <person name="Hurst L."/>
            <person name="Atkin R."/>
            <person name="Barron A."/>
            <person name="Bason N."/>
            <person name="Bentley S.D."/>
            <person name="Chillingworth C."/>
            <person name="Chillingworth T."/>
            <person name="Churcher C."/>
            <person name="Clark L."/>
            <person name="Corton C."/>
            <person name="Cronin A."/>
            <person name="Doggett J."/>
            <person name="Dowd L."/>
            <person name="Feltwell T."/>
            <person name="Hance Z."/>
            <person name="Harris B."/>
            <person name="Hauser H."/>
            <person name="Holroyd S."/>
            <person name="Jagels K."/>
            <person name="James K.D."/>
            <person name="Lennard N."/>
            <person name="Line A."/>
            <person name="Mayes R."/>
            <person name="Moule S."/>
            <person name="Mungall K."/>
            <person name="Ormond D."/>
            <person name="Quail M.A."/>
            <person name="Rabbinowitsch E."/>
            <person name="Rutherford K.M."/>
            <person name="Sanders M."/>
            <person name="Sharp S."/>
            <person name="Simmonds M."/>
            <person name="Stevens K."/>
            <person name="Whitehead S."/>
            <person name="Barrell B.G."/>
            <person name="Spratt B.G."/>
            <person name="Parkhill J."/>
        </authorList>
    </citation>
    <scope>NUCLEOTIDE SEQUENCE [LARGE SCALE GENOMIC DNA]</scope>
    <source>
        <strain>MSSA476</strain>
    </source>
</reference>
<name>LRGA_STAAS</name>
<protein>
    <recommendedName>
        <fullName evidence="1">Antiholin-like protein LrgA</fullName>
    </recommendedName>
</protein>